<keyword id="KW-0002">3D-structure</keyword>
<keyword id="KW-0963">Cytoplasm</keyword>
<keyword id="KW-0484">Methanogenesis</keyword>
<keyword id="KW-0554">One-carbon metabolism</keyword>
<keyword id="KW-0560">Oxidoreductase</keyword>
<name>MER_METBF</name>
<dbReference type="EC" id="1.5.98.2" evidence="1"/>
<dbReference type="EMBL" id="CP000099">
    <property type="protein sequence ID" value="AAZ69238.1"/>
    <property type="molecule type" value="Genomic_DNA"/>
</dbReference>
<dbReference type="PDB" id="1Z69">
    <property type="method" value="X-ray"/>
    <property type="resolution" value="2.61 A"/>
    <property type="chains" value="A/B/C/D=1-327"/>
</dbReference>
<dbReference type="PDBsum" id="1Z69"/>
<dbReference type="SMR" id="Q46FV4"/>
<dbReference type="STRING" id="269797.Mbar_A0254"/>
<dbReference type="PaxDb" id="269797-Mbar_A0254"/>
<dbReference type="KEGG" id="mba:Mbar_A0254"/>
<dbReference type="eggNOG" id="arCOG02410">
    <property type="taxonomic scope" value="Archaea"/>
</dbReference>
<dbReference type="HOGENOM" id="CLU_027853_5_3_2"/>
<dbReference type="OrthoDB" id="213164at2157"/>
<dbReference type="UniPathway" id="UPA00640">
    <property type="reaction ID" value="UER00697"/>
</dbReference>
<dbReference type="EvolutionaryTrace" id="Q46FV4"/>
<dbReference type="GO" id="GO:0005737">
    <property type="term" value="C:cytoplasm"/>
    <property type="evidence" value="ECO:0007669"/>
    <property type="project" value="UniProtKB-SubCell"/>
</dbReference>
<dbReference type="GO" id="GO:0018537">
    <property type="term" value="F:coenzyme F420-dependent N5,N10-methenyltetrahydromethanopterin reductase activity"/>
    <property type="evidence" value="ECO:0007669"/>
    <property type="project" value="UniProtKB-UniRule"/>
</dbReference>
<dbReference type="GO" id="GO:0016705">
    <property type="term" value="F:oxidoreductase activity, acting on paired donors, with incorporation or reduction of molecular oxygen"/>
    <property type="evidence" value="ECO:0007669"/>
    <property type="project" value="InterPro"/>
</dbReference>
<dbReference type="GO" id="GO:0019386">
    <property type="term" value="P:methanogenesis, from carbon dioxide"/>
    <property type="evidence" value="ECO:0007669"/>
    <property type="project" value="UniProtKB-UniRule"/>
</dbReference>
<dbReference type="GO" id="GO:0006730">
    <property type="term" value="P:one-carbon metabolic process"/>
    <property type="evidence" value="ECO:0007669"/>
    <property type="project" value="UniProtKB-UniRule"/>
</dbReference>
<dbReference type="CDD" id="cd01097">
    <property type="entry name" value="Tetrahydromethanopterin_reductase"/>
    <property type="match status" value="1"/>
</dbReference>
<dbReference type="Gene3D" id="3.20.20.30">
    <property type="entry name" value="Luciferase-like domain"/>
    <property type="match status" value="1"/>
</dbReference>
<dbReference type="HAMAP" id="MF_01091">
    <property type="entry name" value="F420_mer"/>
    <property type="match status" value="1"/>
</dbReference>
<dbReference type="InterPro" id="IPR050564">
    <property type="entry name" value="F420-G6PD/mer"/>
</dbReference>
<dbReference type="InterPro" id="IPR011251">
    <property type="entry name" value="Luciferase-like_dom"/>
</dbReference>
<dbReference type="InterPro" id="IPR036661">
    <property type="entry name" value="Luciferase-like_sf"/>
</dbReference>
<dbReference type="InterPro" id="IPR019946">
    <property type="entry name" value="MeH4methanopterin_reductase"/>
</dbReference>
<dbReference type="NCBIfam" id="TIGR03555">
    <property type="entry name" value="F420_mer"/>
    <property type="match status" value="1"/>
</dbReference>
<dbReference type="NCBIfam" id="NF002619">
    <property type="entry name" value="PRK02271.1"/>
    <property type="match status" value="1"/>
</dbReference>
<dbReference type="PANTHER" id="PTHR43244">
    <property type="match status" value="1"/>
</dbReference>
<dbReference type="PANTHER" id="PTHR43244:SF1">
    <property type="entry name" value="5,10-METHYLENETETRAHYDROMETHANOPTERIN REDUCTASE"/>
    <property type="match status" value="1"/>
</dbReference>
<dbReference type="Pfam" id="PF00296">
    <property type="entry name" value="Bac_luciferase"/>
    <property type="match status" value="1"/>
</dbReference>
<dbReference type="SUPFAM" id="SSF51679">
    <property type="entry name" value="Bacterial luciferase-like"/>
    <property type="match status" value="1"/>
</dbReference>
<sequence length="328" mass="34592">MKFGIEFVPSDPALKIAYYAKLSEQQGFDHVWITDHYNNRDVYSTLTVLALNTNSIKIGPGVTNSYTRNPAITASSIASIAEISGGRAVLGLGPGDKATFDAMGIAWKKPLATTKEAIQAIRDFISGKKVSMDGEMIKFAGAKLAFKAGNIPIYMGAQGPKMLELAGEIADGVLINASHPKDFEVAVEQIKKGAEKAGRDPSEVDVTAYACFSIDKDPVKAVNAAKVVVAFIVAGSPDLVLERHGIPVEAKSQIGAAIAKGDFGALMGGLVTPQMIEAFSICGTPDDCMKRIKDLEAIGVTQIVAGSPIGPAKEKAIKLIGKEIIAKM</sequence>
<reference key="1">
    <citation type="journal article" date="2006" name="J. Bacteriol.">
        <title>The Methanosarcina barkeri genome: comparative analysis with Methanosarcina acetivorans and Methanosarcina mazei reveals extensive rearrangement within methanosarcinal genomes.</title>
        <authorList>
            <person name="Maeder D.L."/>
            <person name="Anderson I."/>
            <person name="Brettin T.S."/>
            <person name="Bruce D.C."/>
            <person name="Gilna P."/>
            <person name="Han C.S."/>
            <person name="Lapidus A."/>
            <person name="Metcalf W.W."/>
            <person name="Saunders E."/>
            <person name="Tapia R."/>
            <person name="Sowers K.R."/>
        </authorList>
    </citation>
    <scope>NUCLEOTIDE SEQUENCE [LARGE SCALE GENOMIC DNA]</scope>
    <source>
        <strain>Fusaro / DSM 804</strain>
    </source>
</reference>
<accession>Q46FV4</accession>
<evidence type="ECO:0000255" key="1">
    <source>
        <dbReference type="HAMAP-Rule" id="MF_01091"/>
    </source>
</evidence>
<evidence type="ECO:0007829" key="2">
    <source>
        <dbReference type="PDB" id="1Z69"/>
    </source>
</evidence>
<organism>
    <name type="scientific">Methanosarcina barkeri (strain Fusaro / DSM 804)</name>
    <dbReference type="NCBI Taxonomy" id="269797"/>
    <lineage>
        <taxon>Archaea</taxon>
        <taxon>Methanobacteriati</taxon>
        <taxon>Methanobacteriota</taxon>
        <taxon>Stenosarchaea group</taxon>
        <taxon>Methanomicrobia</taxon>
        <taxon>Methanosarcinales</taxon>
        <taxon>Methanosarcinaceae</taxon>
        <taxon>Methanosarcina</taxon>
    </lineage>
</organism>
<protein>
    <recommendedName>
        <fullName evidence="1">5,10-methylenetetrahydromethanopterin reductase</fullName>
        <ecNumber evidence="1">1.5.98.2</ecNumber>
    </recommendedName>
    <alternativeName>
        <fullName evidence="1">Coenzyme F420-dependent N(5),N(10)-methylenetetrahydromethanopterin reductase</fullName>
    </alternativeName>
    <alternativeName>
        <fullName evidence="1">Methylene-H(4)MPT reductase</fullName>
    </alternativeName>
</protein>
<comment type="function">
    <text evidence="1">Catalyzes the reversible reduction of methylene-H(4)MPT to methyl-H(4)MPT.</text>
</comment>
<comment type="catalytic activity">
    <reaction evidence="1">
        <text>5-methyl-5,6,7,8-tetrahydromethanopterin + oxidized coenzyme F420-(gamma-L-Glu)(n) + H(+) = 5,10-methylenetetrahydromethanopterin + reduced coenzyme F420-(gamma-L-Glu)(n)</text>
        <dbReference type="Rhea" id="RHEA:21144"/>
        <dbReference type="Rhea" id="RHEA-COMP:12939"/>
        <dbReference type="Rhea" id="RHEA-COMP:14378"/>
        <dbReference type="ChEBI" id="CHEBI:15378"/>
        <dbReference type="ChEBI" id="CHEBI:57818"/>
        <dbReference type="ChEBI" id="CHEBI:58116"/>
        <dbReference type="ChEBI" id="CHEBI:133980"/>
        <dbReference type="ChEBI" id="CHEBI:139511"/>
        <dbReference type="EC" id="1.5.98.2"/>
    </reaction>
</comment>
<comment type="pathway">
    <text evidence="1">One-carbon metabolism; methanogenesis from CO(2); methyl-coenzyme M from 5,10-methylene-5,6,7,8-tetrahydromethanopterin: step 1/2.</text>
</comment>
<comment type="subcellular location">
    <subcellularLocation>
        <location evidence="1">Cytoplasm</location>
    </subcellularLocation>
</comment>
<comment type="similarity">
    <text evidence="1">Belongs to the mer family.</text>
</comment>
<gene>
    <name evidence="1" type="primary">mer</name>
    <name type="ordered locus">Mbar_A0254</name>
</gene>
<proteinExistence type="evidence at protein level"/>
<feature type="chain" id="PRO_1000064889" description="5,10-methylenetetrahydromethanopterin reductase">
    <location>
        <begin position="1"/>
        <end position="328"/>
    </location>
</feature>
<feature type="strand" evidence="2">
    <location>
        <begin position="2"/>
        <end position="7"/>
    </location>
</feature>
<feature type="helix" evidence="2">
    <location>
        <begin position="13"/>
        <end position="25"/>
    </location>
</feature>
<feature type="strand" evidence="2">
    <location>
        <begin position="29"/>
        <end position="33"/>
    </location>
</feature>
<feature type="helix" evidence="2">
    <location>
        <begin position="42"/>
        <end position="51"/>
    </location>
</feature>
<feature type="strand" evidence="2">
    <location>
        <begin position="54"/>
        <end position="61"/>
    </location>
</feature>
<feature type="strand" evidence="2">
    <location>
        <begin position="63"/>
        <end position="68"/>
    </location>
</feature>
<feature type="helix" evidence="2">
    <location>
        <begin position="70"/>
        <end position="84"/>
    </location>
</feature>
<feature type="strand" evidence="2">
    <location>
        <begin position="90"/>
        <end position="93"/>
    </location>
</feature>
<feature type="helix" evidence="2">
    <location>
        <begin position="97"/>
        <end position="102"/>
    </location>
</feature>
<feature type="helix" evidence="2">
    <location>
        <begin position="110"/>
        <end position="125"/>
    </location>
</feature>
<feature type="strand" evidence="2">
    <location>
        <begin position="130"/>
        <end position="133"/>
    </location>
</feature>
<feature type="strand" evidence="2">
    <location>
        <begin position="138"/>
        <end position="142"/>
    </location>
</feature>
<feature type="strand" evidence="2">
    <location>
        <begin position="153"/>
        <end position="156"/>
    </location>
</feature>
<feature type="helix" evidence="2">
    <location>
        <begin position="160"/>
        <end position="169"/>
    </location>
</feature>
<feature type="strand" evidence="2">
    <location>
        <begin position="171"/>
        <end position="175"/>
    </location>
</feature>
<feature type="helix" evidence="2">
    <location>
        <begin position="180"/>
        <end position="197"/>
    </location>
</feature>
<feature type="helix" evidence="2">
    <location>
        <begin position="201"/>
        <end position="203"/>
    </location>
</feature>
<feature type="strand" evidence="2">
    <location>
        <begin position="204"/>
        <end position="214"/>
    </location>
</feature>
<feature type="helix" evidence="2">
    <location>
        <begin position="218"/>
        <end position="234"/>
    </location>
</feature>
<feature type="helix" evidence="2">
    <location>
        <begin position="238"/>
        <end position="243"/>
    </location>
</feature>
<feature type="helix" evidence="2">
    <location>
        <begin position="248"/>
        <end position="259"/>
    </location>
</feature>
<feature type="helix" evidence="2">
    <location>
        <begin position="263"/>
        <end position="268"/>
    </location>
</feature>
<feature type="helix" evidence="2">
    <location>
        <begin position="273"/>
        <end position="279"/>
    </location>
</feature>
<feature type="strand" evidence="2">
    <location>
        <begin position="281"/>
        <end position="284"/>
    </location>
</feature>
<feature type="helix" evidence="2">
    <location>
        <begin position="285"/>
        <end position="297"/>
    </location>
</feature>
<feature type="strand" evidence="2">
    <location>
        <begin position="302"/>
        <end position="312"/>
    </location>
</feature>
<feature type="helix" evidence="2">
    <location>
        <begin position="313"/>
        <end position="323"/>
    </location>
</feature>
<feature type="turn" evidence="2">
    <location>
        <begin position="324"/>
        <end position="326"/>
    </location>
</feature>